<feature type="chain" id="PRO_0000060960" description="Cytochrome b">
    <location>
        <begin position="1"/>
        <end position="379"/>
    </location>
</feature>
<feature type="transmembrane region" description="Helical" evidence="2">
    <location>
        <begin position="33"/>
        <end position="53"/>
    </location>
</feature>
<feature type="transmembrane region" description="Helical" evidence="2">
    <location>
        <begin position="77"/>
        <end position="98"/>
    </location>
</feature>
<feature type="transmembrane region" description="Helical" evidence="2">
    <location>
        <begin position="113"/>
        <end position="133"/>
    </location>
</feature>
<feature type="transmembrane region" description="Helical" evidence="2">
    <location>
        <begin position="178"/>
        <end position="198"/>
    </location>
</feature>
<feature type="transmembrane region" description="Helical" evidence="2">
    <location>
        <begin position="226"/>
        <end position="246"/>
    </location>
</feature>
<feature type="transmembrane region" description="Helical" evidence="2">
    <location>
        <begin position="288"/>
        <end position="308"/>
    </location>
</feature>
<feature type="transmembrane region" description="Helical" evidence="2">
    <location>
        <begin position="320"/>
        <end position="340"/>
    </location>
</feature>
<feature type="transmembrane region" description="Helical" evidence="2">
    <location>
        <begin position="347"/>
        <end position="367"/>
    </location>
</feature>
<feature type="binding site" description="axial binding residue" evidence="2">
    <location>
        <position position="83"/>
    </location>
    <ligand>
        <name>heme b</name>
        <dbReference type="ChEBI" id="CHEBI:60344"/>
        <label>b562</label>
    </ligand>
    <ligandPart>
        <name>Fe</name>
        <dbReference type="ChEBI" id="CHEBI:18248"/>
    </ligandPart>
</feature>
<feature type="binding site" description="axial binding residue" evidence="2">
    <location>
        <position position="97"/>
    </location>
    <ligand>
        <name>heme b</name>
        <dbReference type="ChEBI" id="CHEBI:60344"/>
        <label>b566</label>
    </ligand>
    <ligandPart>
        <name>Fe</name>
        <dbReference type="ChEBI" id="CHEBI:18248"/>
    </ligandPart>
</feature>
<feature type="binding site" description="axial binding residue" evidence="2">
    <location>
        <position position="182"/>
    </location>
    <ligand>
        <name>heme b</name>
        <dbReference type="ChEBI" id="CHEBI:60344"/>
        <label>b562</label>
    </ligand>
    <ligandPart>
        <name>Fe</name>
        <dbReference type="ChEBI" id="CHEBI:18248"/>
    </ligandPart>
</feature>
<feature type="binding site" description="axial binding residue" evidence="2">
    <location>
        <position position="196"/>
    </location>
    <ligand>
        <name>heme b</name>
        <dbReference type="ChEBI" id="CHEBI:60344"/>
        <label>b566</label>
    </ligand>
    <ligandPart>
        <name>Fe</name>
        <dbReference type="ChEBI" id="CHEBI:18248"/>
    </ligandPart>
</feature>
<feature type="binding site" evidence="2">
    <location>
        <position position="201"/>
    </location>
    <ligand>
        <name>a ubiquinone</name>
        <dbReference type="ChEBI" id="CHEBI:16389"/>
    </ligand>
</feature>
<keyword id="KW-0249">Electron transport</keyword>
<keyword id="KW-0349">Heme</keyword>
<keyword id="KW-0408">Iron</keyword>
<keyword id="KW-0472">Membrane</keyword>
<keyword id="KW-0479">Metal-binding</keyword>
<keyword id="KW-0496">Mitochondrion</keyword>
<keyword id="KW-0999">Mitochondrion inner membrane</keyword>
<keyword id="KW-0679">Respiratory chain</keyword>
<keyword id="KW-0812">Transmembrane</keyword>
<keyword id="KW-1133">Transmembrane helix</keyword>
<keyword id="KW-0813">Transport</keyword>
<keyword id="KW-0830">Ubiquinone</keyword>
<proteinExistence type="inferred from homology"/>
<name>CYB_EUMJU</name>
<dbReference type="EMBL" id="X82311">
    <property type="protein sequence ID" value="CAA57754.1"/>
    <property type="molecule type" value="Genomic_DNA"/>
</dbReference>
<dbReference type="EMBL" id="AJ428578">
    <property type="protein sequence ID" value="CAD21744.1"/>
    <property type="molecule type" value="Genomic_DNA"/>
</dbReference>
<dbReference type="PIR" id="S58462">
    <property type="entry name" value="S58462"/>
</dbReference>
<dbReference type="RefSeq" id="NP_659362.1">
    <property type="nucleotide sequence ID" value="NC_004030.2"/>
</dbReference>
<dbReference type="SMR" id="Q34471"/>
<dbReference type="GeneID" id="805017"/>
<dbReference type="KEGG" id="eju:805017"/>
<dbReference type="CTD" id="4519"/>
<dbReference type="OrthoDB" id="15293at33554"/>
<dbReference type="GO" id="GO:0005743">
    <property type="term" value="C:mitochondrial inner membrane"/>
    <property type="evidence" value="ECO:0007669"/>
    <property type="project" value="UniProtKB-SubCell"/>
</dbReference>
<dbReference type="GO" id="GO:0045275">
    <property type="term" value="C:respiratory chain complex III"/>
    <property type="evidence" value="ECO:0007669"/>
    <property type="project" value="InterPro"/>
</dbReference>
<dbReference type="GO" id="GO:0046872">
    <property type="term" value="F:metal ion binding"/>
    <property type="evidence" value="ECO:0007669"/>
    <property type="project" value="UniProtKB-KW"/>
</dbReference>
<dbReference type="GO" id="GO:0008121">
    <property type="term" value="F:ubiquinol-cytochrome-c reductase activity"/>
    <property type="evidence" value="ECO:0007669"/>
    <property type="project" value="InterPro"/>
</dbReference>
<dbReference type="GO" id="GO:0006122">
    <property type="term" value="P:mitochondrial electron transport, ubiquinol to cytochrome c"/>
    <property type="evidence" value="ECO:0007669"/>
    <property type="project" value="TreeGrafter"/>
</dbReference>
<dbReference type="CDD" id="cd00290">
    <property type="entry name" value="cytochrome_b_C"/>
    <property type="match status" value="1"/>
</dbReference>
<dbReference type="CDD" id="cd00284">
    <property type="entry name" value="Cytochrome_b_N"/>
    <property type="match status" value="1"/>
</dbReference>
<dbReference type="FunFam" id="1.20.810.10:FF:000002">
    <property type="entry name" value="Cytochrome b"/>
    <property type="match status" value="1"/>
</dbReference>
<dbReference type="Gene3D" id="1.20.810.10">
    <property type="entry name" value="Cytochrome Bc1 Complex, Chain C"/>
    <property type="match status" value="1"/>
</dbReference>
<dbReference type="InterPro" id="IPR005798">
    <property type="entry name" value="Cyt_b/b6_C"/>
</dbReference>
<dbReference type="InterPro" id="IPR036150">
    <property type="entry name" value="Cyt_b/b6_C_sf"/>
</dbReference>
<dbReference type="InterPro" id="IPR005797">
    <property type="entry name" value="Cyt_b/b6_N"/>
</dbReference>
<dbReference type="InterPro" id="IPR027387">
    <property type="entry name" value="Cytb/b6-like_sf"/>
</dbReference>
<dbReference type="InterPro" id="IPR030689">
    <property type="entry name" value="Cytochrome_b"/>
</dbReference>
<dbReference type="InterPro" id="IPR048260">
    <property type="entry name" value="Cytochrome_b_C_euk/bac"/>
</dbReference>
<dbReference type="InterPro" id="IPR048259">
    <property type="entry name" value="Cytochrome_b_N_euk/bac"/>
</dbReference>
<dbReference type="InterPro" id="IPR016174">
    <property type="entry name" value="Di-haem_cyt_TM"/>
</dbReference>
<dbReference type="PANTHER" id="PTHR19271">
    <property type="entry name" value="CYTOCHROME B"/>
    <property type="match status" value="1"/>
</dbReference>
<dbReference type="PANTHER" id="PTHR19271:SF16">
    <property type="entry name" value="CYTOCHROME B"/>
    <property type="match status" value="1"/>
</dbReference>
<dbReference type="Pfam" id="PF00032">
    <property type="entry name" value="Cytochrom_B_C"/>
    <property type="match status" value="1"/>
</dbReference>
<dbReference type="Pfam" id="PF00033">
    <property type="entry name" value="Cytochrome_B"/>
    <property type="match status" value="1"/>
</dbReference>
<dbReference type="PIRSF" id="PIRSF038885">
    <property type="entry name" value="COB"/>
    <property type="match status" value="1"/>
</dbReference>
<dbReference type="SUPFAM" id="SSF81648">
    <property type="entry name" value="a domain/subunit of cytochrome bc1 complex (Ubiquinol-cytochrome c reductase)"/>
    <property type="match status" value="1"/>
</dbReference>
<dbReference type="SUPFAM" id="SSF81342">
    <property type="entry name" value="Transmembrane di-heme cytochromes"/>
    <property type="match status" value="1"/>
</dbReference>
<dbReference type="PROSITE" id="PS51003">
    <property type="entry name" value="CYTB_CTER"/>
    <property type="match status" value="1"/>
</dbReference>
<dbReference type="PROSITE" id="PS51002">
    <property type="entry name" value="CYTB_NTER"/>
    <property type="match status" value="1"/>
</dbReference>
<comment type="function">
    <text evidence="2">Component of the ubiquinol-cytochrome c reductase complex (complex III or cytochrome b-c1 complex) that is part of the mitochondrial respiratory chain. The b-c1 complex mediates electron transfer from ubiquinol to cytochrome c. Contributes to the generation of a proton gradient across the mitochondrial membrane that is then used for ATP synthesis.</text>
</comment>
<comment type="cofactor">
    <cofactor evidence="2">
        <name>heme b</name>
        <dbReference type="ChEBI" id="CHEBI:60344"/>
    </cofactor>
    <text evidence="2">Binds 2 heme b groups non-covalently.</text>
</comment>
<comment type="subunit">
    <text evidence="2">The cytochrome bc1 complex contains 11 subunits: 3 respiratory subunits (MT-CYB, CYC1 and UQCRFS1), 2 core proteins (UQCRC1 and UQCRC2) and 6 low-molecular weight proteins (UQCRH/QCR6, UQCRB/QCR7, UQCRQ/QCR8, UQCR10/QCR9, UQCR11/QCR10 and a cleavage product of UQCRFS1). This cytochrome bc1 complex then forms a dimer.</text>
</comment>
<comment type="subcellular location">
    <subcellularLocation>
        <location evidence="2">Mitochondrion inner membrane</location>
        <topology evidence="2">Multi-pass membrane protein</topology>
    </subcellularLocation>
</comment>
<comment type="miscellaneous">
    <text evidence="1">Heme 1 (or BL or b562) is low-potential and absorbs at about 562 nm, and heme 2 (or BH or b566) is high-potential and absorbs at about 566 nm.</text>
</comment>
<comment type="similarity">
    <text evidence="3 4">Belongs to the cytochrome b family.</text>
</comment>
<comment type="caution">
    <text evidence="2">The full-length protein contains only eight transmembrane helices, not nine as predicted by bioinformatics tools.</text>
</comment>
<sequence>MTNIRKAHPLAKIINNSLIDLPAPSNISTWWNFGSLLAACLALQILTGLFLAMHYTSDTTTAFSSVAHICRDVNYGWLIRYMHANGASMFFICLYMHVGRGLYYGSYTLTETWNIGIILLFTIMATAFMGYVLPWGQMSFWGATVITNLLSAIPYIGTNLVEWIWGGFSVDKATLTRFFAFHFILPFVASALVMVHLLFLHETGSNNPSGISSNSDKIPFHPYYTIKDILGTLLLILILMLLVMFSPDLLGDPDNYIPANPLSTPPHIKPEWYFLFAYAILRSIPNKLGGVLALLLSILILVIIPLLHTSKQRGMMFRPISQCLFWLLVADLLTLTWIGGQPVEHPFITIGQLASILYFTILLVLMPIAGIIENNILKW</sequence>
<evidence type="ECO:0000250" key="1"/>
<evidence type="ECO:0000250" key="2">
    <source>
        <dbReference type="UniProtKB" id="P00157"/>
    </source>
</evidence>
<evidence type="ECO:0000255" key="3">
    <source>
        <dbReference type="PROSITE-ProRule" id="PRU00967"/>
    </source>
</evidence>
<evidence type="ECO:0000255" key="4">
    <source>
        <dbReference type="PROSITE-ProRule" id="PRU00968"/>
    </source>
</evidence>
<organism>
    <name type="scientific">Eumetopias jubatus</name>
    <name type="common">Steller sea lion</name>
    <name type="synonym">Phoca jubata</name>
    <dbReference type="NCBI Taxonomy" id="34886"/>
    <lineage>
        <taxon>Eukaryota</taxon>
        <taxon>Metazoa</taxon>
        <taxon>Chordata</taxon>
        <taxon>Craniata</taxon>
        <taxon>Vertebrata</taxon>
        <taxon>Euteleostomi</taxon>
        <taxon>Mammalia</taxon>
        <taxon>Eutheria</taxon>
        <taxon>Laurasiatheria</taxon>
        <taxon>Carnivora</taxon>
        <taxon>Caniformia</taxon>
        <taxon>Pinnipedia</taxon>
        <taxon>Otariidae</taxon>
        <taxon>Eumetopias</taxon>
    </lineage>
</organism>
<protein>
    <recommendedName>
        <fullName>Cytochrome b</fullName>
    </recommendedName>
    <alternativeName>
        <fullName>Complex III subunit 3</fullName>
    </alternativeName>
    <alternativeName>
        <fullName>Complex III subunit III</fullName>
    </alternativeName>
    <alternativeName>
        <fullName>Cytochrome b-c1 complex subunit 3</fullName>
    </alternativeName>
    <alternativeName>
        <fullName>Ubiquinol-cytochrome-c reductase complex cytochrome b subunit</fullName>
    </alternativeName>
</protein>
<accession>Q34471</accession>
<accession>Q34472</accession>
<gene>
    <name type="primary">MT-CYB</name>
    <name type="synonym">COB</name>
    <name type="synonym">CYTB</name>
    <name type="synonym">MTCYB</name>
</gene>
<geneLocation type="mitochondrion"/>
<reference key="1">
    <citation type="journal article" date="1995" name="J. Mol. Evol.">
        <title>A molecular view of pinniped relationships with particular emphasis on the true seals.</title>
        <authorList>
            <person name="Arnason U."/>
            <person name="Bodin K."/>
            <person name="Gullberg A."/>
            <person name="Ledje C."/>
            <person name="Mouchaty S."/>
        </authorList>
    </citation>
    <scope>NUCLEOTIDE SEQUENCE [GENOMIC DNA]</scope>
</reference>
<reference key="2">
    <citation type="journal article" date="2002" name="Proc. Natl. Acad. Sci. U.S.A.">
        <title>Mammalian mitogenomic relationships and the root of the eutherian tree.</title>
        <authorList>
            <person name="Arnason U."/>
            <person name="Adegoke J.A."/>
            <person name="Bodin K."/>
            <person name="Born E.W."/>
            <person name="Esa Y.B."/>
            <person name="Gullberg A."/>
            <person name="Nilsson M."/>
            <person name="Short R.V."/>
            <person name="Xu X."/>
            <person name="Janke A."/>
        </authorList>
    </citation>
    <scope>NUCLEOTIDE SEQUENCE [GENOMIC DNA]</scope>
</reference>